<reference key="1">
    <citation type="journal article" date="2005" name="Arch. Microbiol.">
        <title>The genome sequence of an anaerobic aromatic-degrading denitrifying bacterium, strain EbN1.</title>
        <authorList>
            <person name="Rabus R."/>
            <person name="Kube M."/>
            <person name="Heider J."/>
            <person name="Beck A."/>
            <person name="Heitmann K."/>
            <person name="Widdel F."/>
            <person name="Reinhardt R."/>
        </authorList>
    </citation>
    <scope>NUCLEOTIDE SEQUENCE [LARGE SCALE GENOMIC DNA]</scope>
    <source>
        <strain>DSM 19018 / LMG 30748 / EbN1</strain>
    </source>
</reference>
<name>TILS_AROAE</name>
<gene>
    <name evidence="1" type="primary">tilS</name>
    <name type="ordered locus">AZOSEA23500</name>
    <name type="ORF">ebA4149</name>
</gene>
<sequence>MLVAAAVAPRQRLCVAFSGGADSTTLLHLLARLRPRFGFDLCAAHVHHALSPNADAWLDFCARQCAALDVAFHPFREQVARDHPAGLEAAAREVRHAALSRVTCDWLVFGHHQDDQAETLLFRLLRGAGVRGAAAMAAIEPGFPGRLRPLLGVRRADIRAFAQAASLEWIEDESNADPRHARNFLRHHVFPLFGEAFPGAVPALARASGHFREADGLLGDLAALDYAACGGSPWLRDRLLMLSDERVRNLLRWRIRQMGCEAPARARLVEAVRQLRATHAPLYLPLGTAACCTYRDRLWLEPQRDGAPEQPLPWRQEPALCWGAGVVRFEPVTGAGIGRGALQRAMDVALVPRWPGLMLRQDSGRPLRSFKNLCQEAGIPAWLRPRLPVLRVDGEAAWIGEIGVAAEFRCGPGEAGLLLVWQR</sequence>
<comment type="function">
    <text evidence="1">Ligates lysine onto the cytidine present at position 34 of the AUA codon-specific tRNA(Ile) that contains the anticodon CAU, in an ATP-dependent manner. Cytidine is converted to lysidine, thus changing the amino acid specificity of the tRNA from methionine to isoleucine.</text>
</comment>
<comment type="catalytic activity">
    <reaction evidence="1">
        <text>cytidine(34) in tRNA(Ile2) + L-lysine + ATP = lysidine(34) in tRNA(Ile2) + AMP + diphosphate + H(+)</text>
        <dbReference type="Rhea" id="RHEA:43744"/>
        <dbReference type="Rhea" id="RHEA-COMP:10625"/>
        <dbReference type="Rhea" id="RHEA-COMP:10670"/>
        <dbReference type="ChEBI" id="CHEBI:15378"/>
        <dbReference type="ChEBI" id="CHEBI:30616"/>
        <dbReference type="ChEBI" id="CHEBI:32551"/>
        <dbReference type="ChEBI" id="CHEBI:33019"/>
        <dbReference type="ChEBI" id="CHEBI:82748"/>
        <dbReference type="ChEBI" id="CHEBI:83665"/>
        <dbReference type="ChEBI" id="CHEBI:456215"/>
        <dbReference type="EC" id="6.3.4.19"/>
    </reaction>
</comment>
<comment type="subcellular location">
    <subcellularLocation>
        <location evidence="1">Cytoplasm</location>
    </subcellularLocation>
</comment>
<comment type="domain">
    <text>The N-terminal region contains the highly conserved SGGXDS motif, predicted to be a P-loop motif involved in ATP binding.</text>
</comment>
<comment type="similarity">
    <text evidence="1">Belongs to the tRNA(Ile)-lysidine synthase family.</text>
</comment>
<keyword id="KW-0067">ATP-binding</keyword>
<keyword id="KW-0963">Cytoplasm</keyword>
<keyword id="KW-0436">Ligase</keyword>
<keyword id="KW-0547">Nucleotide-binding</keyword>
<keyword id="KW-1185">Reference proteome</keyword>
<keyword id="KW-0819">tRNA processing</keyword>
<proteinExistence type="inferred from homology"/>
<evidence type="ECO:0000255" key="1">
    <source>
        <dbReference type="HAMAP-Rule" id="MF_01161"/>
    </source>
</evidence>
<accession>Q5P2I9</accession>
<dbReference type="EC" id="6.3.4.19" evidence="1"/>
<dbReference type="EMBL" id="CR555306">
    <property type="protein sequence ID" value="CAI08475.1"/>
    <property type="molecule type" value="Genomic_DNA"/>
</dbReference>
<dbReference type="RefSeq" id="WP_011238162.1">
    <property type="nucleotide sequence ID" value="NC_006513.1"/>
</dbReference>
<dbReference type="SMR" id="Q5P2I9"/>
<dbReference type="STRING" id="76114.ebA4149"/>
<dbReference type="KEGG" id="eba:ebA4149"/>
<dbReference type="eggNOG" id="COG0037">
    <property type="taxonomic scope" value="Bacteria"/>
</dbReference>
<dbReference type="HOGENOM" id="CLU_018869_2_0_4"/>
<dbReference type="OrthoDB" id="9807403at2"/>
<dbReference type="Proteomes" id="UP000006552">
    <property type="component" value="Chromosome"/>
</dbReference>
<dbReference type="GO" id="GO:0005737">
    <property type="term" value="C:cytoplasm"/>
    <property type="evidence" value="ECO:0007669"/>
    <property type="project" value="UniProtKB-SubCell"/>
</dbReference>
<dbReference type="GO" id="GO:0005524">
    <property type="term" value="F:ATP binding"/>
    <property type="evidence" value="ECO:0007669"/>
    <property type="project" value="UniProtKB-UniRule"/>
</dbReference>
<dbReference type="GO" id="GO:0032267">
    <property type="term" value="F:tRNA(Ile)-lysidine synthase activity"/>
    <property type="evidence" value="ECO:0007669"/>
    <property type="project" value="UniProtKB-EC"/>
</dbReference>
<dbReference type="GO" id="GO:0006400">
    <property type="term" value="P:tRNA modification"/>
    <property type="evidence" value="ECO:0007669"/>
    <property type="project" value="UniProtKB-UniRule"/>
</dbReference>
<dbReference type="CDD" id="cd01992">
    <property type="entry name" value="TilS_N"/>
    <property type="match status" value="1"/>
</dbReference>
<dbReference type="Gene3D" id="1.20.59.20">
    <property type="match status" value="1"/>
</dbReference>
<dbReference type="Gene3D" id="3.40.50.620">
    <property type="entry name" value="HUPs"/>
    <property type="match status" value="1"/>
</dbReference>
<dbReference type="HAMAP" id="MF_01161">
    <property type="entry name" value="tRNA_Ile_lys_synt"/>
    <property type="match status" value="1"/>
</dbReference>
<dbReference type="InterPro" id="IPR012796">
    <property type="entry name" value="Lysidine-tRNA-synth_C"/>
</dbReference>
<dbReference type="InterPro" id="IPR014729">
    <property type="entry name" value="Rossmann-like_a/b/a_fold"/>
</dbReference>
<dbReference type="InterPro" id="IPR011063">
    <property type="entry name" value="TilS/TtcA_N"/>
</dbReference>
<dbReference type="InterPro" id="IPR012094">
    <property type="entry name" value="tRNA_Ile_lys_synt"/>
</dbReference>
<dbReference type="InterPro" id="IPR012795">
    <property type="entry name" value="tRNA_Ile_lys_synt_N"/>
</dbReference>
<dbReference type="InterPro" id="IPR015262">
    <property type="entry name" value="tRNA_Ile_lys_synt_subst-bd"/>
</dbReference>
<dbReference type="NCBIfam" id="TIGR02432">
    <property type="entry name" value="lysidine_TilS_N"/>
    <property type="match status" value="1"/>
</dbReference>
<dbReference type="PANTHER" id="PTHR43033">
    <property type="entry name" value="TRNA(ILE)-LYSIDINE SYNTHASE-RELATED"/>
    <property type="match status" value="1"/>
</dbReference>
<dbReference type="PANTHER" id="PTHR43033:SF1">
    <property type="entry name" value="TRNA(ILE)-LYSIDINE SYNTHASE-RELATED"/>
    <property type="match status" value="1"/>
</dbReference>
<dbReference type="Pfam" id="PF01171">
    <property type="entry name" value="ATP_bind_3"/>
    <property type="match status" value="1"/>
</dbReference>
<dbReference type="Pfam" id="PF09179">
    <property type="entry name" value="TilS"/>
    <property type="match status" value="1"/>
</dbReference>
<dbReference type="Pfam" id="PF11734">
    <property type="entry name" value="TilS_C"/>
    <property type="match status" value="1"/>
</dbReference>
<dbReference type="SMART" id="SM00977">
    <property type="entry name" value="TilS_C"/>
    <property type="match status" value="1"/>
</dbReference>
<dbReference type="SUPFAM" id="SSF52402">
    <property type="entry name" value="Adenine nucleotide alpha hydrolases-like"/>
    <property type="match status" value="1"/>
</dbReference>
<dbReference type="SUPFAM" id="SSF82829">
    <property type="entry name" value="MesJ substrate recognition domain-like"/>
    <property type="match status" value="1"/>
</dbReference>
<dbReference type="SUPFAM" id="SSF56037">
    <property type="entry name" value="PheT/TilS domain"/>
    <property type="match status" value="1"/>
</dbReference>
<protein>
    <recommendedName>
        <fullName evidence="1">tRNA(Ile)-lysidine synthase</fullName>
        <ecNumber evidence="1">6.3.4.19</ecNumber>
    </recommendedName>
    <alternativeName>
        <fullName evidence="1">tRNA(Ile)-2-lysyl-cytidine synthase</fullName>
    </alternativeName>
    <alternativeName>
        <fullName evidence="1">tRNA(Ile)-lysidine synthetase</fullName>
    </alternativeName>
</protein>
<feature type="chain" id="PRO_0000181640" description="tRNA(Ile)-lysidine synthase">
    <location>
        <begin position="1"/>
        <end position="423"/>
    </location>
</feature>
<feature type="binding site" evidence="1">
    <location>
        <begin position="18"/>
        <end position="23"/>
    </location>
    <ligand>
        <name>ATP</name>
        <dbReference type="ChEBI" id="CHEBI:30616"/>
    </ligand>
</feature>
<organism>
    <name type="scientific">Aromatoleum aromaticum (strain DSM 19018 / LMG 30748 / EbN1)</name>
    <name type="common">Azoarcus sp. (strain EbN1)</name>
    <dbReference type="NCBI Taxonomy" id="76114"/>
    <lineage>
        <taxon>Bacteria</taxon>
        <taxon>Pseudomonadati</taxon>
        <taxon>Pseudomonadota</taxon>
        <taxon>Betaproteobacteria</taxon>
        <taxon>Rhodocyclales</taxon>
        <taxon>Rhodocyclaceae</taxon>
        <taxon>Aromatoleum</taxon>
    </lineage>
</organism>